<proteinExistence type="inferred from homology"/>
<name>M2_I80A6</name>
<organism>
    <name type="scientific">Influenza A virus (strain A/Duck/Hokkaido/8/1980 H3N8)</name>
    <dbReference type="NCBI Taxonomy" id="387207"/>
    <lineage>
        <taxon>Viruses</taxon>
        <taxon>Riboviria</taxon>
        <taxon>Orthornavirae</taxon>
        <taxon>Negarnaviricota</taxon>
        <taxon>Polyploviricotina</taxon>
        <taxon>Insthoviricetes</taxon>
        <taxon>Articulavirales</taxon>
        <taxon>Orthomyxoviridae</taxon>
        <taxon>Alphainfluenzavirus</taxon>
        <taxon>Alphainfluenzavirus influenzae</taxon>
        <taxon>Influenza A virus</taxon>
    </lineage>
</organism>
<organismHost>
    <name type="scientific">Aves</name>
    <dbReference type="NCBI Taxonomy" id="8782"/>
</organismHost>
<organismHost>
    <name type="scientific">Equus caballus</name>
    <name type="common">Horse</name>
    <dbReference type="NCBI Taxonomy" id="9796"/>
</organismHost>
<comment type="function">
    <text evidence="1">Forms a proton-selective ion channel that is necessary for the efficient release of the viral genome during virus entry. After attaching to the cell surface, the virion enters the cell by endocytosis. Acidification of the endosome triggers M2 ion channel activity. The influx of protons into virion interior is believed to disrupt interactions between the viral ribonucleoprotein (RNP), matrix protein 1 (M1), and lipid bilayers, thereby freeing the viral genome from interaction with viral proteins and enabling RNA segments to migrate to the host cell nucleus, where influenza virus RNA transcription and replication occur. Also plays a role in viral proteins secretory pathway. Elevates the intravesicular pH of normally acidic compartments, such as trans-Golgi network, preventing newly formed hemagglutinin from premature switching to the fusion-active conformation.</text>
</comment>
<comment type="activity regulation">
    <text>The M2 protein from most influenza A strains is inhibited by amantadine and rimantadine, resulting in viral uncoating incapacity. Emergence of amantadine-resistant variants is usually rapid.</text>
</comment>
<comment type="subunit">
    <text evidence="1">Homotetramer; composed of two disulfide-linked dimers held together by non-covalent interactions. May interact with matrix protein 1.</text>
</comment>
<comment type="subcellular location">
    <subcellularLocation>
        <location evidence="1">Virion membrane</location>
    </subcellularLocation>
    <subcellularLocation>
        <location evidence="1">Host apical cell membrane</location>
        <topology evidence="1">Single-pass type III membrane protein</topology>
    </subcellularLocation>
    <text evidence="1">Abundantly expressed at the apical plasma membrane in infected polarized epithelial cells, in close proximity to budding and assembled virions. Minor component of virions (only 16-20 molecules/virion).</text>
</comment>
<comment type="alternative products">
    <event type="alternative splicing"/>
    <isoform>
        <id>Q08IG9-1</id>
        <name>M2</name>
        <sequence type="displayed"/>
    </isoform>
    <isoform>
        <id>Q08IG8-1</id>
        <name>M1</name>
        <sequence type="external"/>
    </isoform>
    <text>Only the first 9 residues are shared by the 2 isoforms.</text>
</comment>
<comment type="domain">
    <text evidence="1">Cytoplasmic tail plays an important role in virion assembly and morphogenesis.</text>
</comment>
<comment type="miscellaneous">
    <text evidence="1">When the channel is activated, one or more imidazole moieties of His-37 probably become bi-protonated.</text>
</comment>
<comment type="similarity">
    <text evidence="1">Belongs to the influenza viruses matrix protein M2 family.</text>
</comment>
<protein>
    <recommendedName>
        <fullName evidence="1">Matrix protein 2</fullName>
    </recommendedName>
    <alternativeName>
        <fullName evidence="1">Proton channel protein M2</fullName>
    </alternativeName>
</protein>
<keyword id="KW-0025">Alternative splicing</keyword>
<keyword id="KW-1015">Disulfide bond</keyword>
<keyword id="KW-1032">Host cell membrane</keyword>
<keyword id="KW-1043">Host membrane</keyword>
<keyword id="KW-0945">Host-virus interaction</keyword>
<keyword id="KW-0375">Hydrogen ion transport</keyword>
<keyword id="KW-1083">Inhibition of host autophagy by virus</keyword>
<keyword id="KW-0407">Ion channel</keyword>
<keyword id="KW-0406">Ion transport</keyword>
<keyword id="KW-0449">Lipoprotein</keyword>
<keyword id="KW-0472">Membrane</keyword>
<keyword id="KW-0564">Palmitate</keyword>
<keyword id="KW-0597">Phosphoprotein</keyword>
<keyword id="KW-0735">Signal-anchor</keyword>
<keyword id="KW-0812">Transmembrane</keyword>
<keyword id="KW-1133">Transmembrane helix</keyword>
<keyword id="KW-0813">Transport</keyword>
<keyword id="KW-1182">Viral ion channel</keyword>
<keyword id="KW-0946">Virion</keyword>
<gene>
    <name evidence="1" type="primary">M</name>
</gene>
<sequence length="97" mass="11185">MSLLTEVETPTRNGWECKCSDSSDPLVIAASIIGILHLILWILDRLFFKCIYRRLKYGLKRGPSTEGVPESMREEYRQEQQNAVDVDDGHFVNIELE</sequence>
<reference key="1">
    <citation type="submission" date="2006-09" db="EMBL/GenBank/DDBJ databases">
        <title>Evolutionary characterization of H3N8 viruses isolated from ducks in Hokkaido.</title>
        <authorList>
            <person name="Kida H."/>
            <person name="Sakoda Y."/>
        </authorList>
    </citation>
    <scope>NUCLEOTIDE SEQUENCE [GENOMIC RNA]</scope>
</reference>
<evidence type="ECO:0000255" key="1">
    <source>
        <dbReference type="HAMAP-Rule" id="MF_04069"/>
    </source>
</evidence>
<evidence type="ECO:0000256" key="2">
    <source>
        <dbReference type="SAM" id="MobiDB-lite"/>
    </source>
</evidence>
<dbReference type="EMBL" id="AB275286">
    <property type="protein sequence ID" value="BAF33062.1"/>
    <property type="molecule type" value="Genomic_RNA"/>
</dbReference>
<dbReference type="SMR" id="Q08IG9"/>
<dbReference type="IntAct" id="Q08IG9">
    <property type="interactions" value="1"/>
</dbReference>
<dbReference type="MINT" id="Q08IG9"/>
<dbReference type="Proteomes" id="UP000008578">
    <property type="component" value="Genome"/>
</dbReference>
<dbReference type="GO" id="GO:0020002">
    <property type="term" value="C:host cell plasma membrane"/>
    <property type="evidence" value="ECO:0007669"/>
    <property type="project" value="UniProtKB-SubCell"/>
</dbReference>
<dbReference type="GO" id="GO:0016020">
    <property type="term" value="C:membrane"/>
    <property type="evidence" value="ECO:0007669"/>
    <property type="project" value="UniProtKB-UniRule"/>
</dbReference>
<dbReference type="GO" id="GO:0055036">
    <property type="term" value="C:virion membrane"/>
    <property type="evidence" value="ECO:0007669"/>
    <property type="project" value="UniProtKB-SubCell"/>
</dbReference>
<dbReference type="GO" id="GO:0005216">
    <property type="term" value="F:monoatomic ion channel activity"/>
    <property type="evidence" value="ECO:0007669"/>
    <property type="project" value="UniProtKB-UniRule"/>
</dbReference>
<dbReference type="GO" id="GO:0015078">
    <property type="term" value="F:proton transmembrane transporter activity"/>
    <property type="evidence" value="ECO:0007669"/>
    <property type="project" value="UniProtKB-UniRule"/>
</dbReference>
<dbReference type="GO" id="GO:0051259">
    <property type="term" value="P:protein complex oligomerization"/>
    <property type="evidence" value="ECO:0007669"/>
    <property type="project" value="UniProtKB-UniRule"/>
</dbReference>
<dbReference type="GO" id="GO:0044694">
    <property type="term" value="P:symbiont genome entry into host cell via pore formation in plasma membrane"/>
    <property type="evidence" value="ECO:0007669"/>
    <property type="project" value="UniProtKB-UniRule"/>
</dbReference>
<dbReference type="GO" id="GO:0140321">
    <property type="term" value="P:symbiont-mediated suppression of host autophagy"/>
    <property type="evidence" value="ECO:0007669"/>
    <property type="project" value="UniProtKB-KW"/>
</dbReference>
<dbReference type="Gene3D" id="6.10.250.1640">
    <property type="match status" value="1"/>
</dbReference>
<dbReference type="HAMAP" id="MF_04069">
    <property type="entry name" value="INFV_M2"/>
    <property type="match status" value="1"/>
</dbReference>
<dbReference type="InterPro" id="IPR002089">
    <property type="entry name" value="Flu_M2"/>
</dbReference>
<dbReference type="Pfam" id="PF00599">
    <property type="entry name" value="Flu_M2"/>
    <property type="match status" value="1"/>
</dbReference>
<feature type="chain" id="PRO_0000326371" description="Matrix protein 2">
    <location>
        <begin position="1"/>
        <end position="97"/>
    </location>
</feature>
<feature type="topological domain" description="Virion surface" evidence="1">
    <location>
        <begin position="1"/>
        <end position="22"/>
    </location>
</feature>
<feature type="transmembrane region" description="Helical; Signal-anchor for type III membrane protein" evidence="1">
    <location>
        <begin position="23"/>
        <end position="43"/>
    </location>
</feature>
<feature type="topological domain" description="Intravirion" evidence="1">
    <location>
        <begin position="44"/>
        <end position="97"/>
    </location>
</feature>
<feature type="region of interest" description="Disordered" evidence="2">
    <location>
        <begin position="61"/>
        <end position="80"/>
    </location>
</feature>
<feature type="site" description="Essential for channel activity, possibly by being protonated during channel activation, and by forming the channel gate and the selective filter" evidence="1">
    <location>
        <position position="37"/>
    </location>
</feature>
<feature type="site" description="Seems to be involved in pH gating" evidence="1">
    <location>
        <position position="41"/>
    </location>
</feature>
<feature type="modified residue" description="Phosphoserine; by host" evidence="1">
    <location>
        <position position="64"/>
    </location>
</feature>
<feature type="lipid moiety-binding region" description="S-palmitoyl cysteine; by host" evidence="1">
    <location>
        <position position="50"/>
    </location>
</feature>
<feature type="disulfide bond" description="Interchain (with C-17)" evidence="1">
    <location>
        <position position="17"/>
    </location>
</feature>
<feature type="disulfide bond" description="Interchain (with C-19)" evidence="1">
    <location>
        <position position="19"/>
    </location>
</feature>
<accession>Q08IG9</accession>